<feature type="chain" id="PRO_0000238156" description="Phosphoglycolate phosphatase">
    <location>
        <begin position="1"/>
        <end position="226"/>
    </location>
</feature>
<feature type="active site" description="Nucleophile" evidence="1">
    <location>
        <position position="12"/>
    </location>
</feature>
<feature type="binding site" evidence="1">
    <location>
        <position position="12"/>
    </location>
    <ligand>
        <name>Mg(2+)</name>
        <dbReference type="ChEBI" id="CHEBI:18420"/>
    </ligand>
</feature>
<feature type="binding site" evidence="1">
    <location>
        <position position="14"/>
    </location>
    <ligand>
        <name>Mg(2+)</name>
        <dbReference type="ChEBI" id="CHEBI:18420"/>
    </ligand>
</feature>
<feature type="binding site" evidence="1">
    <location>
        <position position="177"/>
    </location>
    <ligand>
        <name>Mg(2+)</name>
        <dbReference type="ChEBI" id="CHEBI:18420"/>
    </ligand>
</feature>
<comment type="function">
    <text evidence="1">Specifically catalyzes the dephosphorylation of 2-phosphoglycolate. Is involved in the dissimilation of the intracellular 2-phosphoglycolate formed during the DNA repair of 3'-phosphoglycolate ends, a major class of DNA lesions induced by oxidative stress.</text>
</comment>
<comment type="catalytic activity">
    <reaction evidence="1">
        <text>2-phosphoglycolate + H2O = glycolate + phosphate</text>
        <dbReference type="Rhea" id="RHEA:14369"/>
        <dbReference type="ChEBI" id="CHEBI:15377"/>
        <dbReference type="ChEBI" id="CHEBI:29805"/>
        <dbReference type="ChEBI" id="CHEBI:43474"/>
        <dbReference type="ChEBI" id="CHEBI:58033"/>
        <dbReference type="EC" id="3.1.3.18"/>
    </reaction>
</comment>
<comment type="cofactor">
    <cofactor evidence="1">
        <name>Mg(2+)</name>
        <dbReference type="ChEBI" id="CHEBI:18420"/>
    </cofactor>
</comment>
<comment type="pathway">
    <text evidence="1">Organic acid metabolism; glycolate biosynthesis; glycolate from 2-phosphoglycolate: step 1/1.</text>
</comment>
<comment type="similarity">
    <text evidence="1">Belongs to the HAD-like hydrolase superfamily. CbbY/CbbZ/Gph/YieH family.</text>
</comment>
<name>GPH_COLP3</name>
<gene>
    <name type="ordered locus">CPS_0261</name>
</gene>
<keyword id="KW-0119">Carbohydrate metabolism</keyword>
<keyword id="KW-0378">Hydrolase</keyword>
<keyword id="KW-0460">Magnesium</keyword>
<keyword id="KW-0479">Metal-binding</keyword>
<proteinExistence type="inferred from homology"/>
<dbReference type="EC" id="3.1.3.18" evidence="1"/>
<dbReference type="EMBL" id="CP000083">
    <property type="protein sequence ID" value="AAZ25705.1"/>
    <property type="molecule type" value="Genomic_DNA"/>
</dbReference>
<dbReference type="RefSeq" id="WP_011041135.1">
    <property type="nucleotide sequence ID" value="NC_003910.7"/>
</dbReference>
<dbReference type="SMR" id="Q48A85"/>
<dbReference type="STRING" id="167879.CPS_0261"/>
<dbReference type="KEGG" id="cps:CPS_0261"/>
<dbReference type="HOGENOM" id="CLU_045011_19_1_6"/>
<dbReference type="UniPathway" id="UPA00865">
    <property type="reaction ID" value="UER00834"/>
</dbReference>
<dbReference type="Proteomes" id="UP000000547">
    <property type="component" value="Chromosome"/>
</dbReference>
<dbReference type="GO" id="GO:0005829">
    <property type="term" value="C:cytosol"/>
    <property type="evidence" value="ECO:0007669"/>
    <property type="project" value="TreeGrafter"/>
</dbReference>
<dbReference type="GO" id="GO:0046872">
    <property type="term" value="F:metal ion binding"/>
    <property type="evidence" value="ECO:0007669"/>
    <property type="project" value="UniProtKB-KW"/>
</dbReference>
<dbReference type="GO" id="GO:0008967">
    <property type="term" value="F:phosphoglycolate phosphatase activity"/>
    <property type="evidence" value="ECO:0007669"/>
    <property type="project" value="UniProtKB-UniRule"/>
</dbReference>
<dbReference type="GO" id="GO:0005975">
    <property type="term" value="P:carbohydrate metabolic process"/>
    <property type="evidence" value="ECO:0007669"/>
    <property type="project" value="InterPro"/>
</dbReference>
<dbReference type="GO" id="GO:0006281">
    <property type="term" value="P:DNA repair"/>
    <property type="evidence" value="ECO:0007669"/>
    <property type="project" value="TreeGrafter"/>
</dbReference>
<dbReference type="GO" id="GO:0046295">
    <property type="term" value="P:glycolate biosynthetic process"/>
    <property type="evidence" value="ECO:0007669"/>
    <property type="project" value="UniProtKB-UniRule"/>
</dbReference>
<dbReference type="CDD" id="cd16417">
    <property type="entry name" value="HAD_PGPase"/>
    <property type="match status" value="1"/>
</dbReference>
<dbReference type="FunFam" id="3.40.50.1000:FF:000022">
    <property type="entry name" value="Phosphoglycolate phosphatase"/>
    <property type="match status" value="1"/>
</dbReference>
<dbReference type="Gene3D" id="3.40.50.1000">
    <property type="entry name" value="HAD superfamily/HAD-like"/>
    <property type="match status" value="1"/>
</dbReference>
<dbReference type="Gene3D" id="1.10.150.240">
    <property type="entry name" value="Putative phosphatase, domain 2"/>
    <property type="match status" value="1"/>
</dbReference>
<dbReference type="HAMAP" id="MF_00495">
    <property type="entry name" value="GPH_hydrolase_bact"/>
    <property type="match status" value="1"/>
</dbReference>
<dbReference type="InterPro" id="IPR050155">
    <property type="entry name" value="HAD-like_hydrolase_sf"/>
</dbReference>
<dbReference type="InterPro" id="IPR036412">
    <property type="entry name" value="HAD-like_sf"/>
</dbReference>
<dbReference type="InterPro" id="IPR006439">
    <property type="entry name" value="HAD-SF_hydro_IA"/>
</dbReference>
<dbReference type="InterPro" id="IPR041492">
    <property type="entry name" value="HAD_2"/>
</dbReference>
<dbReference type="InterPro" id="IPR023214">
    <property type="entry name" value="HAD_sf"/>
</dbReference>
<dbReference type="InterPro" id="IPR023198">
    <property type="entry name" value="PGP-like_dom2"/>
</dbReference>
<dbReference type="InterPro" id="IPR037512">
    <property type="entry name" value="PGPase_prok"/>
</dbReference>
<dbReference type="NCBIfam" id="TIGR01549">
    <property type="entry name" value="HAD-SF-IA-v1"/>
    <property type="match status" value="1"/>
</dbReference>
<dbReference type="NCBIfam" id="TIGR01509">
    <property type="entry name" value="HAD-SF-IA-v3"/>
    <property type="match status" value="1"/>
</dbReference>
<dbReference type="NCBIfam" id="TIGR01449">
    <property type="entry name" value="PGP_bact"/>
    <property type="match status" value="1"/>
</dbReference>
<dbReference type="NCBIfam" id="NF009695">
    <property type="entry name" value="PRK13222.1-2"/>
    <property type="match status" value="1"/>
</dbReference>
<dbReference type="PANTHER" id="PTHR43434">
    <property type="entry name" value="PHOSPHOGLYCOLATE PHOSPHATASE"/>
    <property type="match status" value="1"/>
</dbReference>
<dbReference type="PANTHER" id="PTHR43434:SF1">
    <property type="entry name" value="PHOSPHOGLYCOLATE PHOSPHATASE"/>
    <property type="match status" value="1"/>
</dbReference>
<dbReference type="Pfam" id="PF13419">
    <property type="entry name" value="HAD_2"/>
    <property type="match status" value="1"/>
</dbReference>
<dbReference type="SFLD" id="SFLDG01135">
    <property type="entry name" value="C1.5.6:_HAD__Beta-PGM__Phospha"/>
    <property type="match status" value="1"/>
</dbReference>
<dbReference type="SFLD" id="SFLDG01129">
    <property type="entry name" value="C1.5:_HAD__Beta-PGM__Phosphata"/>
    <property type="match status" value="1"/>
</dbReference>
<dbReference type="SUPFAM" id="SSF56784">
    <property type="entry name" value="HAD-like"/>
    <property type="match status" value="1"/>
</dbReference>
<accession>Q48A85</accession>
<organism>
    <name type="scientific">Colwellia psychrerythraea (strain 34H / ATCC BAA-681)</name>
    <name type="common">Vibrio psychroerythus</name>
    <dbReference type="NCBI Taxonomy" id="167879"/>
    <lineage>
        <taxon>Bacteria</taxon>
        <taxon>Pseudomonadati</taxon>
        <taxon>Pseudomonadota</taxon>
        <taxon>Gammaproteobacteria</taxon>
        <taxon>Alteromonadales</taxon>
        <taxon>Colwelliaceae</taxon>
        <taxon>Colwellia</taxon>
    </lineage>
</organism>
<reference key="1">
    <citation type="journal article" date="2005" name="Proc. Natl. Acad. Sci. U.S.A.">
        <title>The psychrophilic lifestyle as revealed by the genome sequence of Colwellia psychrerythraea 34H through genomic and proteomic analyses.</title>
        <authorList>
            <person name="Methe B.A."/>
            <person name="Nelson K.E."/>
            <person name="Deming J.W."/>
            <person name="Momen B."/>
            <person name="Melamud E."/>
            <person name="Zhang X."/>
            <person name="Moult J."/>
            <person name="Madupu R."/>
            <person name="Nelson W.C."/>
            <person name="Dodson R.J."/>
            <person name="Brinkac L.M."/>
            <person name="Daugherty S.C."/>
            <person name="Durkin A.S."/>
            <person name="DeBoy R.T."/>
            <person name="Kolonay J.F."/>
            <person name="Sullivan S.A."/>
            <person name="Zhou L."/>
            <person name="Davidsen T.M."/>
            <person name="Wu M."/>
            <person name="Huston A.L."/>
            <person name="Lewis M."/>
            <person name="Weaver B."/>
            <person name="Weidman J.F."/>
            <person name="Khouri H."/>
            <person name="Utterback T.R."/>
            <person name="Feldblyum T.V."/>
            <person name="Fraser C.M."/>
        </authorList>
    </citation>
    <scope>NUCLEOTIDE SEQUENCE [LARGE SCALE GENOMIC DNA]</scope>
    <source>
        <strain>34H / ATCC BAA-681</strain>
    </source>
</reference>
<evidence type="ECO:0000255" key="1">
    <source>
        <dbReference type="HAMAP-Rule" id="MF_00495"/>
    </source>
</evidence>
<protein>
    <recommendedName>
        <fullName evidence="1">Phosphoglycolate phosphatase</fullName>
        <shortName evidence="1">PGP</shortName>
        <shortName evidence="1">PGPase</shortName>
        <ecNumber evidence="1">3.1.3.18</ecNumber>
    </recommendedName>
</protein>
<sequence length="226" mass="24921">MKLQEKEVLLFDLDGTLVDSAPDLALAVNRTLKDLNKATFDQDTIHHWVGNGAKVLIERALSGSAIIDKELDETLTKDALTIFLAHYQQCLCIESVLYDDVQEGLLSLKAAGFRLAIITNKPAIFIQPILTGLGIDNLFELLIGGDTLADKKPHPAPLHYAMKQLNVVAEQCVMIGDSKNDILAAKAANIDSVGLTYGYNYGEDINQYGPQWCFDTFNELLISLKR</sequence>